<gene>
    <name evidence="1" type="primary">napA</name>
    <name type="ordered locus">Sden_1497</name>
</gene>
<reference key="1">
    <citation type="submission" date="2006-03" db="EMBL/GenBank/DDBJ databases">
        <title>Complete sequence of Shewanella denitrificans OS217.</title>
        <authorList>
            <consortium name="US DOE Joint Genome Institute"/>
            <person name="Copeland A."/>
            <person name="Lucas S."/>
            <person name="Lapidus A."/>
            <person name="Barry K."/>
            <person name="Detter J.C."/>
            <person name="Glavina del Rio T."/>
            <person name="Hammon N."/>
            <person name="Israni S."/>
            <person name="Dalin E."/>
            <person name="Tice H."/>
            <person name="Pitluck S."/>
            <person name="Brettin T."/>
            <person name="Bruce D."/>
            <person name="Han C."/>
            <person name="Tapia R."/>
            <person name="Gilna P."/>
            <person name="Kiss H."/>
            <person name="Schmutz J."/>
            <person name="Larimer F."/>
            <person name="Land M."/>
            <person name="Hauser L."/>
            <person name="Kyrpides N."/>
            <person name="Lykidis A."/>
            <person name="Richardson P."/>
        </authorList>
    </citation>
    <scope>NUCLEOTIDE SEQUENCE [LARGE SCALE GENOMIC DNA]</scope>
    <source>
        <strain>OS217 / ATCC BAA-1090 / DSM 15013</strain>
    </source>
</reference>
<name>NAPA_SHEDO</name>
<keyword id="KW-0004">4Fe-4S</keyword>
<keyword id="KW-0249">Electron transport</keyword>
<keyword id="KW-0408">Iron</keyword>
<keyword id="KW-0411">Iron-sulfur</keyword>
<keyword id="KW-0479">Metal-binding</keyword>
<keyword id="KW-0500">Molybdenum</keyword>
<keyword id="KW-0534">Nitrate assimilation</keyword>
<keyword id="KW-0560">Oxidoreductase</keyword>
<keyword id="KW-0574">Periplasm</keyword>
<keyword id="KW-1185">Reference proteome</keyword>
<keyword id="KW-0732">Signal</keyword>
<keyword id="KW-0813">Transport</keyword>
<dbReference type="EC" id="1.9.6.1" evidence="1"/>
<dbReference type="EMBL" id="CP000302">
    <property type="protein sequence ID" value="ABE54782.1"/>
    <property type="molecule type" value="Genomic_DNA"/>
</dbReference>
<dbReference type="RefSeq" id="WP_011495940.1">
    <property type="nucleotide sequence ID" value="NC_007954.1"/>
</dbReference>
<dbReference type="SMR" id="Q12P44"/>
<dbReference type="STRING" id="318161.Sden_1497"/>
<dbReference type="KEGG" id="sdn:Sden_1497"/>
<dbReference type="eggNOG" id="COG0243">
    <property type="taxonomic scope" value="Bacteria"/>
</dbReference>
<dbReference type="HOGENOM" id="CLU_000422_13_4_6"/>
<dbReference type="OrthoDB" id="9810782at2"/>
<dbReference type="Proteomes" id="UP000001982">
    <property type="component" value="Chromosome"/>
</dbReference>
<dbReference type="GO" id="GO:0016020">
    <property type="term" value="C:membrane"/>
    <property type="evidence" value="ECO:0007669"/>
    <property type="project" value="TreeGrafter"/>
</dbReference>
<dbReference type="GO" id="GO:0009325">
    <property type="term" value="C:nitrate reductase complex"/>
    <property type="evidence" value="ECO:0007669"/>
    <property type="project" value="TreeGrafter"/>
</dbReference>
<dbReference type="GO" id="GO:0042597">
    <property type="term" value="C:periplasmic space"/>
    <property type="evidence" value="ECO:0007669"/>
    <property type="project" value="UniProtKB-SubCell"/>
</dbReference>
<dbReference type="GO" id="GO:0051539">
    <property type="term" value="F:4 iron, 4 sulfur cluster binding"/>
    <property type="evidence" value="ECO:0007669"/>
    <property type="project" value="UniProtKB-KW"/>
</dbReference>
<dbReference type="GO" id="GO:0009055">
    <property type="term" value="F:electron transfer activity"/>
    <property type="evidence" value="ECO:0007669"/>
    <property type="project" value="UniProtKB-UniRule"/>
</dbReference>
<dbReference type="GO" id="GO:0005506">
    <property type="term" value="F:iron ion binding"/>
    <property type="evidence" value="ECO:0007669"/>
    <property type="project" value="UniProtKB-UniRule"/>
</dbReference>
<dbReference type="GO" id="GO:0030151">
    <property type="term" value="F:molybdenum ion binding"/>
    <property type="evidence" value="ECO:0007669"/>
    <property type="project" value="InterPro"/>
</dbReference>
<dbReference type="GO" id="GO:0043546">
    <property type="term" value="F:molybdopterin cofactor binding"/>
    <property type="evidence" value="ECO:0007669"/>
    <property type="project" value="InterPro"/>
</dbReference>
<dbReference type="GO" id="GO:0050140">
    <property type="term" value="F:nitrate reductase (cytochrome) activity"/>
    <property type="evidence" value="ECO:0007669"/>
    <property type="project" value="UniProtKB-EC"/>
</dbReference>
<dbReference type="GO" id="GO:0045333">
    <property type="term" value="P:cellular respiration"/>
    <property type="evidence" value="ECO:0007669"/>
    <property type="project" value="UniProtKB-ARBA"/>
</dbReference>
<dbReference type="GO" id="GO:0006777">
    <property type="term" value="P:Mo-molybdopterin cofactor biosynthetic process"/>
    <property type="evidence" value="ECO:0007669"/>
    <property type="project" value="UniProtKB-UniRule"/>
</dbReference>
<dbReference type="GO" id="GO:0042128">
    <property type="term" value="P:nitrate assimilation"/>
    <property type="evidence" value="ECO:0007669"/>
    <property type="project" value="UniProtKB-UniRule"/>
</dbReference>
<dbReference type="CDD" id="cd02791">
    <property type="entry name" value="MopB_CT_Nitrate-R-NapA-like"/>
    <property type="match status" value="1"/>
</dbReference>
<dbReference type="CDD" id="cd02754">
    <property type="entry name" value="MopB_Nitrate-R-NapA-like"/>
    <property type="match status" value="1"/>
</dbReference>
<dbReference type="FunFam" id="2.40.40.20:FF:000005">
    <property type="entry name" value="Periplasmic nitrate reductase"/>
    <property type="match status" value="1"/>
</dbReference>
<dbReference type="Gene3D" id="2.40.40.20">
    <property type="match status" value="1"/>
</dbReference>
<dbReference type="Gene3D" id="3.30.200.210">
    <property type="match status" value="1"/>
</dbReference>
<dbReference type="Gene3D" id="3.40.50.740">
    <property type="match status" value="1"/>
</dbReference>
<dbReference type="Gene3D" id="3.40.228.10">
    <property type="entry name" value="Dimethylsulfoxide Reductase, domain 2"/>
    <property type="match status" value="1"/>
</dbReference>
<dbReference type="HAMAP" id="MF_01630">
    <property type="entry name" value="Nitrate_reduct_NapA"/>
    <property type="match status" value="1"/>
</dbReference>
<dbReference type="InterPro" id="IPR009010">
    <property type="entry name" value="Asp_de-COase-like_dom_sf"/>
</dbReference>
<dbReference type="InterPro" id="IPR041957">
    <property type="entry name" value="CT_Nitrate-R-NapA-like"/>
</dbReference>
<dbReference type="InterPro" id="IPR006657">
    <property type="entry name" value="MoPterin_dinucl-bd_dom"/>
</dbReference>
<dbReference type="InterPro" id="IPR006656">
    <property type="entry name" value="Mopterin_OxRdtase"/>
</dbReference>
<dbReference type="InterPro" id="IPR006963">
    <property type="entry name" value="Mopterin_OxRdtase_4Fe-4S_dom"/>
</dbReference>
<dbReference type="InterPro" id="IPR027467">
    <property type="entry name" value="MopterinOxRdtase_cofactor_BS"/>
</dbReference>
<dbReference type="InterPro" id="IPR010051">
    <property type="entry name" value="Periplasm_NO3_reductase_lsu"/>
</dbReference>
<dbReference type="InterPro" id="IPR050123">
    <property type="entry name" value="Prok_molybdopt-oxidoreductase"/>
</dbReference>
<dbReference type="InterPro" id="IPR006311">
    <property type="entry name" value="TAT_signal"/>
</dbReference>
<dbReference type="NCBIfam" id="TIGR01706">
    <property type="entry name" value="NAPA"/>
    <property type="match status" value="1"/>
</dbReference>
<dbReference type="NCBIfam" id="NF010055">
    <property type="entry name" value="PRK13532.1"/>
    <property type="match status" value="1"/>
</dbReference>
<dbReference type="PANTHER" id="PTHR43105:SF11">
    <property type="entry name" value="PERIPLASMIC NITRATE REDUCTASE"/>
    <property type="match status" value="1"/>
</dbReference>
<dbReference type="PANTHER" id="PTHR43105">
    <property type="entry name" value="RESPIRATORY NITRATE REDUCTASE"/>
    <property type="match status" value="1"/>
</dbReference>
<dbReference type="Pfam" id="PF04879">
    <property type="entry name" value="Molybdop_Fe4S4"/>
    <property type="match status" value="1"/>
</dbReference>
<dbReference type="Pfam" id="PF00384">
    <property type="entry name" value="Molybdopterin"/>
    <property type="match status" value="1"/>
</dbReference>
<dbReference type="Pfam" id="PF01568">
    <property type="entry name" value="Molydop_binding"/>
    <property type="match status" value="1"/>
</dbReference>
<dbReference type="SMART" id="SM00926">
    <property type="entry name" value="Molybdop_Fe4S4"/>
    <property type="match status" value="1"/>
</dbReference>
<dbReference type="SUPFAM" id="SSF50692">
    <property type="entry name" value="ADC-like"/>
    <property type="match status" value="1"/>
</dbReference>
<dbReference type="SUPFAM" id="SSF53706">
    <property type="entry name" value="Formate dehydrogenase/DMSO reductase, domains 1-3"/>
    <property type="match status" value="1"/>
</dbReference>
<dbReference type="PROSITE" id="PS51669">
    <property type="entry name" value="4FE4S_MOW_BIS_MGD"/>
    <property type="match status" value="1"/>
</dbReference>
<dbReference type="PROSITE" id="PS00551">
    <property type="entry name" value="MOLYBDOPTERIN_PROK_1"/>
    <property type="match status" value="1"/>
</dbReference>
<dbReference type="PROSITE" id="PS51318">
    <property type="entry name" value="TAT"/>
    <property type="match status" value="1"/>
</dbReference>
<protein>
    <recommendedName>
        <fullName evidence="1">Periplasmic nitrate reductase</fullName>
        <ecNumber evidence="1">1.9.6.1</ecNumber>
    </recommendedName>
</protein>
<feature type="signal peptide" description="Tat-type signal" evidence="1">
    <location>
        <begin position="1"/>
        <end position="27"/>
    </location>
</feature>
<feature type="chain" id="PRO_5000114527" description="Periplasmic nitrate reductase" evidence="1">
    <location>
        <begin position="28"/>
        <end position="829"/>
    </location>
</feature>
<feature type="domain" description="4Fe-4S Mo/W bis-MGD-type" evidence="1">
    <location>
        <begin position="39"/>
        <end position="95"/>
    </location>
</feature>
<feature type="binding site" evidence="1">
    <location>
        <position position="46"/>
    </location>
    <ligand>
        <name>[4Fe-4S] cluster</name>
        <dbReference type="ChEBI" id="CHEBI:49883"/>
    </ligand>
</feature>
<feature type="binding site" evidence="1">
    <location>
        <position position="49"/>
    </location>
    <ligand>
        <name>[4Fe-4S] cluster</name>
        <dbReference type="ChEBI" id="CHEBI:49883"/>
    </ligand>
</feature>
<feature type="binding site" evidence="1">
    <location>
        <position position="53"/>
    </location>
    <ligand>
        <name>[4Fe-4S] cluster</name>
        <dbReference type="ChEBI" id="CHEBI:49883"/>
    </ligand>
</feature>
<feature type="binding site" evidence="1">
    <location>
        <position position="81"/>
    </location>
    <ligand>
        <name>[4Fe-4S] cluster</name>
        <dbReference type="ChEBI" id="CHEBI:49883"/>
    </ligand>
</feature>
<feature type="binding site" evidence="1">
    <location>
        <position position="83"/>
    </location>
    <ligand>
        <name>Mo-bis(molybdopterin guanine dinucleotide)</name>
        <dbReference type="ChEBI" id="CHEBI:60539"/>
    </ligand>
</feature>
<feature type="binding site" evidence="1">
    <location>
        <position position="150"/>
    </location>
    <ligand>
        <name>Mo-bis(molybdopterin guanine dinucleotide)</name>
        <dbReference type="ChEBI" id="CHEBI:60539"/>
    </ligand>
</feature>
<feature type="binding site" evidence="1">
    <location>
        <position position="175"/>
    </location>
    <ligand>
        <name>Mo-bis(molybdopterin guanine dinucleotide)</name>
        <dbReference type="ChEBI" id="CHEBI:60539"/>
    </ligand>
</feature>
<feature type="binding site" evidence="1">
    <location>
        <position position="179"/>
    </location>
    <ligand>
        <name>Mo-bis(molybdopterin guanine dinucleotide)</name>
        <dbReference type="ChEBI" id="CHEBI:60539"/>
    </ligand>
</feature>
<feature type="binding site" evidence="1">
    <location>
        <begin position="212"/>
        <end position="219"/>
    </location>
    <ligand>
        <name>Mo-bis(molybdopterin guanine dinucleotide)</name>
        <dbReference type="ChEBI" id="CHEBI:60539"/>
    </ligand>
</feature>
<feature type="binding site" evidence="1">
    <location>
        <begin position="243"/>
        <end position="247"/>
    </location>
    <ligand>
        <name>Mo-bis(molybdopterin guanine dinucleotide)</name>
        <dbReference type="ChEBI" id="CHEBI:60539"/>
    </ligand>
</feature>
<feature type="binding site" evidence="1">
    <location>
        <begin position="262"/>
        <end position="264"/>
    </location>
    <ligand>
        <name>Mo-bis(molybdopterin guanine dinucleotide)</name>
        <dbReference type="ChEBI" id="CHEBI:60539"/>
    </ligand>
</feature>
<feature type="binding site" evidence="1">
    <location>
        <position position="373"/>
    </location>
    <ligand>
        <name>Mo-bis(molybdopterin guanine dinucleotide)</name>
        <dbReference type="ChEBI" id="CHEBI:60539"/>
    </ligand>
</feature>
<feature type="binding site" evidence="1">
    <location>
        <position position="377"/>
    </location>
    <ligand>
        <name>Mo-bis(molybdopterin guanine dinucleotide)</name>
        <dbReference type="ChEBI" id="CHEBI:60539"/>
    </ligand>
</feature>
<feature type="binding site" evidence="1">
    <location>
        <position position="483"/>
    </location>
    <ligand>
        <name>Mo-bis(molybdopterin guanine dinucleotide)</name>
        <dbReference type="ChEBI" id="CHEBI:60539"/>
    </ligand>
</feature>
<feature type="binding site" evidence="1">
    <location>
        <begin position="509"/>
        <end position="510"/>
    </location>
    <ligand>
        <name>Mo-bis(molybdopterin guanine dinucleotide)</name>
        <dbReference type="ChEBI" id="CHEBI:60539"/>
    </ligand>
</feature>
<feature type="binding site" evidence="1">
    <location>
        <position position="532"/>
    </location>
    <ligand>
        <name>Mo-bis(molybdopterin guanine dinucleotide)</name>
        <dbReference type="ChEBI" id="CHEBI:60539"/>
    </ligand>
</feature>
<feature type="binding site" evidence="1">
    <location>
        <position position="559"/>
    </location>
    <ligand>
        <name>Mo-bis(molybdopterin guanine dinucleotide)</name>
        <dbReference type="ChEBI" id="CHEBI:60539"/>
    </ligand>
</feature>
<feature type="binding site" evidence="1">
    <location>
        <begin position="719"/>
        <end position="728"/>
    </location>
    <ligand>
        <name>Mo-bis(molybdopterin guanine dinucleotide)</name>
        <dbReference type="ChEBI" id="CHEBI:60539"/>
    </ligand>
</feature>
<feature type="binding site" evidence="1">
    <location>
        <position position="795"/>
    </location>
    <ligand>
        <name>substrate</name>
    </ligand>
</feature>
<feature type="binding site" evidence="1">
    <location>
        <position position="803"/>
    </location>
    <ligand>
        <name>Mo-bis(molybdopterin guanine dinucleotide)</name>
        <dbReference type="ChEBI" id="CHEBI:60539"/>
    </ligand>
</feature>
<feature type="binding site" evidence="1">
    <location>
        <position position="820"/>
    </location>
    <ligand>
        <name>Mo-bis(molybdopterin guanine dinucleotide)</name>
        <dbReference type="ChEBI" id="CHEBI:60539"/>
    </ligand>
</feature>
<evidence type="ECO:0000255" key="1">
    <source>
        <dbReference type="HAMAP-Rule" id="MF_01630"/>
    </source>
</evidence>
<accession>Q12P44</accession>
<proteinExistence type="inferred from homology"/>
<sequence length="829" mass="93039">MNRRDFMKANAVIAAASAAGLALPAGASNLITSSEQTKLEWNKAPCRFCGTGCSVMVATREGKVVATHGDANSEVNRGLSCIKGYFLSKIMYGRDRLTSPMLRMTDGKYDKHGEFTPVSWEKAFDTMAERWKATIKEKGPTAVGMFGSGQWTVWEGYAAVKLMKAGFGTNNIDPNARHCMASAVAGFMRTFGIDEPMGCYDDMEAADAFVLWGSNMAEMHPILWTRVTDRRLSAPHVKVAVLSTFEHRSFDLADLPMVFHPQTDLAILNFIANYIIQNNKVNWDFVNKHVNFRKGTTDIGYGLRPAHPTQMKSKNAATANDSTPIDFEQFKKFVADYDVESVSKLSGVPEHKLLELAELYADPKVKVTSFWTMGFNQHTRGVWCNNLMYNIHLLVGKISTPGNSPFSLTGQPSACGTAREVGTFSHRLPADMVVTDPKHRKIAENIWKIPSGIIPEKPGYHAVEQSRRLKDGDLNCYWVQVNNNMQAGPNINEEGLPGYRNPANFIVVSDAYPTVTTQAADLILPTAMWVEKEGAYGNAERRTQFWHQMVKAPGESKSDLWQLMEFSKRFTTDEVWSKAVLDANPKYKGKTLFEVLFKNGQVDKFPLADADPKYMNDENDAFGFYVQKGLFEEYATFGRGHGHDLADFDTYHKEHGLRWPVVDGKETKWRFREGSDPYVKAGTGFEFYGKPDGRAVIFALPYEPAAEAPDEEFDMWLSTGRVLEHWHSGSMTQRVPELYKAFPDAVCFMHPDDAKKRGLRRGDEVKVMSRRGEIKTRIETRGRNKPPVGLVFVPWFDASQLINKVTLDATDPISKQTDFKKCAVKVIKA</sequence>
<organism>
    <name type="scientific">Shewanella denitrificans (strain OS217 / ATCC BAA-1090 / DSM 15013)</name>
    <dbReference type="NCBI Taxonomy" id="318161"/>
    <lineage>
        <taxon>Bacteria</taxon>
        <taxon>Pseudomonadati</taxon>
        <taxon>Pseudomonadota</taxon>
        <taxon>Gammaproteobacteria</taxon>
        <taxon>Alteromonadales</taxon>
        <taxon>Shewanellaceae</taxon>
        <taxon>Shewanella</taxon>
    </lineage>
</organism>
<comment type="function">
    <text evidence="1">Catalytic subunit of the periplasmic nitrate reductase complex NapAB. Receives electrons from NapB and catalyzes the reduction of nitrate to nitrite.</text>
</comment>
<comment type="catalytic activity">
    <reaction evidence="1">
        <text>2 Fe(II)-[cytochrome] + nitrate + 2 H(+) = 2 Fe(III)-[cytochrome] + nitrite + H2O</text>
        <dbReference type="Rhea" id="RHEA:12909"/>
        <dbReference type="Rhea" id="RHEA-COMP:11777"/>
        <dbReference type="Rhea" id="RHEA-COMP:11778"/>
        <dbReference type="ChEBI" id="CHEBI:15377"/>
        <dbReference type="ChEBI" id="CHEBI:15378"/>
        <dbReference type="ChEBI" id="CHEBI:16301"/>
        <dbReference type="ChEBI" id="CHEBI:17632"/>
        <dbReference type="ChEBI" id="CHEBI:29033"/>
        <dbReference type="ChEBI" id="CHEBI:29034"/>
        <dbReference type="EC" id="1.9.6.1"/>
    </reaction>
</comment>
<comment type="cofactor">
    <cofactor evidence="1">
        <name>[4Fe-4S] cluster</name>
        <dbReference type="ChEBI" id="CHEBI:49883"/>
    </cofactor>
    <text evidence="1">Binds 1 [4Fe-4S] cluster.</text>
</comment>
<comment type="cofactor">
    <cofactor evidence="1">
        <name>Mo-bis(molybdopterin guanine dinucleotide)</name>
        <dbReference type="ChEBI" id="CHEBI:60539"/>
    </cofactor>
    <text evidence="1">Binds 1 molybdenum-bis(molybdopterin guanine dinucleotide) (Mo-bis-MGD) cofactor per subunit.</text>
</comment>
<comment type="subunit">
    <text evidence="1">Component of the periplasmic nitrate reductase NapAB complex composed of NapA and NapB.</text>
</comment>
<comment type="subcellular location">
    <subcellularLocation>
        <location evidence="1">Periplasm</location>
    </subcellularLocation>
</comment>
<comment type="PTM">
    <text evidence="1">Predicted to be exported by the Tat system. The position of the signal peptide cleavage has not been experimentally proven.</text>
</comment>
<comment type="similarity">
    <text evidence="1">Belongs to the prokaryotic molybdopterin-containing oxidoreductase family. NasA/NapA/NarB subfamily.</text>
</comment>